<proteinExistence type="inferred from homology"/>
<evidence type="ECO:0000255" key="1">
    <source>
        <dbReference type="HAMAP-Rule" id="MF_01026"/>
    </source>
</evidence>
<keyword id="KW-0004">4Fe-4S</keyword>
<keyword id="KW-0028">Amino-acid biosynthesis</keyword>
<keyword id="KW-0100">Branched-chain amino acid biosynthesis</keyword>
<keyword id="KW-0408">Iron</keyword>
<keyword id="KW-0411">Iron-sulfur</keyword>
<keyword id="KW-0432">Leucine biosynthesis</keyword>
<keyword id="KW-0456">Lyase</keyword>
<keyword id="KW-0479">Metal-binding</keyword>
<reference key="1">
    <citation type="journal article" date="2008" name="Chem. Biol. Interact.">
        <title>Extending the Bacillus cereus group genomics to putative food-borne pathogens of different toxicity.</title>
        <authorList>
            <person name="Lapidus A."/>
            <person name="Goltsman E."/>
            <person name="Auger S."/>
            <person name="Galleron N."/>
            <person name="Segurens B."/>
            <person name="Dossat C."/>
            <person name="Land M.L."/>
            <person name="Broussolle V."/>
            <person name="Brillard J."/>
            <person name="Guinebretiere M.-H."/>
            <person name="Sanchis V."/>
            <person name="Nguen-the C."/>
            <person name="Lereclus D."/>
            <person name="Richardson P."/>
            <person name="Wincker P."/>
            <person name="Weissenbach J."/>
            <person name="Ehrlich S.D."/>
            <person name="Sorokin A."/>
        </authorList>
    </citation>
    <scope>NUCLEOTIDE SEQUENCE [LARGE SCALE GENOMIC DNA]</scope>
    <source>
        <strain>KBAB4</strain>
    </source>
</reference>
<sequence length="464" mass="51352">MGKRLLDKLWERHVVVTNENGLDLLYIDLHLVHEVTSPQAFEGLRLANRTVRRPELTFATMDHNIPTKDVWNITDRIAKQQLDTLRDNCKQFKVRLADIGDEEQGIVHVIGPELGLTQPGKTIVCGDSHTATHGAFGALAFGIGTSEVEHVLATQTLWQRKPKAMGIELKGKLPKGVYAKDIILHLLSKYGVAVGTGHVMEFYGETIRDMGMEERMTLCNMAIEGGAKAGIIAPDEKTFSYVKGREYAPKDYETFTGKWSELYTDSDAIYDLHISVDVTDLAPYVTWGTNPSMGVPIDEKLPEKHNENDERAFSYMGLSPGQSTFEIPVKHVFIGSCTNSRLSDLEIAASVVKGKKVKEGVRALVVPGSKSVRERAMQKGLHRIFEEAGFEWREPGCSMCLGMNPDQVPEGEHCASTSNRNFEGRQGKGARTHLVSPAMAAAAALYGHFVDIRKESYDGTISYS</sequence>
<feature type="chain" id="PRO_1000135670" description="3-isopropylmalate dehydratase large subunit">
    <location>
        <begin position="1"/>
        <end position="464"/>
    </location>
</feature>
<feature type="binding site" evidence="1">
    <location>
        <position position="337"/>
    </location>
    <ligand>
        <name>[4Fe-4S] cluster</name>
        <dbReference type="ChEBI" id="CHEBI:49883"/>
    </ligand>
</feature>
<feature type="binding site" evidence="1">
    <location>
        <position position="397"/>
    </location>
    <ligand>
        <name>[4Fe-4S] cluster</name>
        <dbReference type="ChEBI" id="CHEBI:49883"/>
    </ligand>
</feature>
<feature type="binding site" evidence="1">
    <location>
        <position position="400"/>
    </location>
    <ligand>
        <name>[4Fe-4S] cluster</name>
        <dbReference type="ChEBI" id="CHEBI:49883"/>
    </ligand>
</feature>
<comment type="function">
    <text evidence="1">Catalyzes the isomerization between 2-isopropylmalate and 3-isopropylmalate, via the formation of 2-isopropylmaleate.</text>
</comment>
<comment type="catalytic activity">
    <reaction evidence="1">
        <text>(2R,3S)-3-isopropylmalate = (2S)-2-isopropylmalate</text>
        <dbReference type="Rhea" id="RHEA:32287"/>
        <dbReference type="ChEBI" id="CHEBI:1178"/>
        <dbReference type="ChEBI" id="CHEBI:35121"/>
        <dbReference type="EC" id="4.2.1.33"/>
    </reaction>
</comment>
<comment type="cofactor">
    <cofactor evidence="1">
        <name>[4Fe-4S] cluster</name>
        <dbReference type="ChEBI" id="CHEBI:49883"/>
    </cofactor>
    <text evidence="1">Binds 1 [4Fe-4S] cluster per subunit.</text>
</comment>
<comment type="pathway">
    <text evidence="1">Amino-acid biosynthesis; L-leucine biosynthesis; L-leucine from 3-methyl-2-oxobutanoate: step 2/4.</text>
</comment>
<comment type="subunit">
    <text evidence="1">Heterodimer of LeuC and LeuD.</text>
</comment>
<comment type="similarity">
    <text evidence="1">Belongs to the aconitase/IPM isomerase family. LeuC type 1 subfamily.</text>
</comment>
<organism>
    <name type="scientific">Bacillus mycoides (strain KBAB4)</name>
    <name type="common">Bacillus weihenstephanensis</name>
    <dbReference type="NCBI Taxonomy" id="315730"/>
    <lineage>
        <taxon>Bacteria</taxon>
        <taxon>Bacillati</taxon>
        <taxon>Bacillota</taxon>
        <taxon>Bacilli</taxon>
        <taxon>Bacillales</taxon>
        <taxon>Bacillaceae</taxon>
        <taxon>Bacillus</taxon>
        <taxon>Bacillus cereus group</taxon>
    </lineage>
</organism>
<gene>
    <name evidence="1" type="primary">leuC</name>
    <name type="ordered locus">BcerKBAB4_1324</name>
</gene>
<dbReference type="EC" id="4.2.1.33" evidence="1"/>
<dbReference type="EMBL" id="CP000903">
    <property type="protein sequence ID" value="ABY42571.1"/>
    <property type="molecule type" value="Genomic_DNA"/>
</dbReference>
<dbReference type="RefSeq" id="WP_002011716.1">
    <property type="nucleotide sequence ID" value="NC_010184.1"/>
</dbReference>
<dbReference type="SMR" id="A9VLG9"/>
<dbReference type="KEGG" id="bwe:BcerKBAB4_1324"/>
<dbReference type="eggNOG" id="COG0065">
    <property type="taxonomic scope" value="Bacteria"/>
</dbReference>
<dbReference type="HOGENOM" id="CLU_006714_3_4_9"/>
<dbReference type="UniPathway" id="UPA00048">
    <property type="reaction ID" value="UER00071"/>
</dbReference>
<dbReference type="Proteomes" id="UP000002154">
    <property type="component" value="Chromosome"/>
</dbReference>
<dbReference type="GO" id="GO:0003861">
    <property type="term" value="F:3-isopropylmalate dehydratase activity"/>
    <property type="evidence" value="ECO:0007669"/>
    <property type="project" value="UniProtKB-UniRule"/>
</dbReference>
<dbReference type="GO" id="GO:0051539">
    <property type="term" value="F:4 iron, 4 sulfur cluster binding"/>
    <property type="evidence" value="ECO:0007669"/>
    <property type="project" value="UniProtKB-KW"/>
</dbReference>
<dbReference type="GO" id="GO:0046872">
    <property type="term" value="F:metal ion binding"/>
    <property type="evidence" value="ECO:0007669"/>
    <property type="project" value="UniProtKB-KW"/>
</dbReference>
<dbReference type="GO" id="GO:0009098">
    <property type="term" value="P:L-leucine biosynthetic process"/>
    <property type="evidence" value="ECO:0007669"/>
    <property type="project" value="UniProtKB-UniRule"/>
</dbReference>
<dbReference type="CDD" id="cd01583">
    <property type="entry name" value="IPMI"/>
    <property type="match status" value="1"/>
</dbReference>
<dbReference type="FunFam" id="3.30.499.10:FF:000007">
    <property type="entry name" value="3-isopropylmalate dehydratase large subunit"/>
    <property type="match status" value="1"/>
</dbReference>
<dbReference type="Gene3D" id="3.30.499.10">
    <property type="entry name" value="Aconitase, domain 3"/>
    <property type="match status" value="2"/>
</dbReference>
<dbReference type="HAMAP" id="MF_01026">
    <property type="entry name" value="LeuC_type1"/>
    <property type="match status" value="1"/>
</dbReference>
<dbReference type="InterPro" id="IPR004430">
    <property type="entry name" value="3-IsopropMal_deHydase_lsu"/>
</dbReference>
<dbReference type="InterPro" id="IPR015931">
    <property type="entry name" value="Acnase/IPM_dHydase_lsu_aba_1/3"/>
</dbReference>
<dbReference type="InterPro" id="IPR001030">
    <property type="entry name" value="Acoase/IPM_deHydtase_lsu_aba"/>
</dbReference>
<dbReference type="InterPro" id="IPR018136">
    <property type="entry name" value="Aconitase_4Fe-4S_BS"/>
</dbReference>
<dbReference type="InterPro" id="IPR036008">
    <property type="entry name" value="Aconitase_4Fe-4S_dom"/>
</dbReference>
<dbReference type="InterPro" id="IPR050067">
    <property type="entry name" value="IPM_dehydratase_rel_enz"/>
</dbReference>
<dbReference type="InterPro" id="IPR033941">
    <property type="entry name" value="IPMI_cat"/>
</dbReference>
<dbReference type="NCBIfam" id="TIGR00170">
    <property type="entry name" value="leuC"/>
    <property type="match status" value="1"/>
</dbReference>
<dbReference type="NCBIfam" id="NF004016">
    <property type="entry name" value="PRK05478.1"/>
    <property type="match status" value="1"/>
</dbReference>
<dbReference type="NCBIfam" id="NF009116">
    <property type="entry name" value="PRK12466.1"/>
    <property type="match status" value="1"/>
</dbReference>
<dbReference type="PANTHER" id="PTHR43822:SF9">
    <property type="entry name" value="3-ISOPROPYLMALATE DEHYDRATASE"/>
    <property type="match status" value="1"/>
</dbReference>
<dbReference type="PANTHER" id="PTHR43822">
    <property type="entry name" value="HOMOACONITASE, MITOCHONDRIAL-RELATED"/>
    <property type="match status" value="1"/>
</dbReference>
<dbReference type="Pfam" id="PF00330">
    <property type="entry name" value="Aconitase"/>
    <property type="match status" value="1"/>
</dbReference>
<dbReference type="PRINTS" id="PR00415">
    <property type="entry name" value="ACONITASE"/>
</dbReference>
<dbReference type="SUPFAM" id="SSF53732">
    <property type="entry name" value="Aconitase iron-sulfur domain"/>
    <property type="match status" value="1"/>
</dbReference>
<dbReference type="PROSITE" id="PS00450">
    <property type="entry name" value="ACONITASE_1"/>
    <property type="match status" value="1"/>
</dbReference>
<dbReference type="PROSITE" id="PS01244">
    <property type="entry name" value="ACONITASE_2"/>
    <property type="match status" value="1"/>
</dbReference>
<protein>
    <recommendedName>
        <fullName evidence="1">3-isopropylmalate dehydratase large subunit</fullName>
        <ecNumber evidence="1">4.2.1.33</ecNumber>
    </recommendedName>
    <alternativeName>
        <fullName evidence="1">Alpha-IPM isomerase</fullName>
        <shortName evidence="1">IPMI</shortName>
    </alternativeName>
    <alternativeName>
        <fullName evidence="1">Isopropylmalate isomerase</fullName>
    </alternativeName>
</protein>
<name>LEUC_BACMK</name>
<accession>A9VLG9</accession>